<protein>
    <recommendedName>
        <fullName evidence="1">Chaperone protein HtpG</fullName>
    </recommendedName>
    <alternativeName>
        <fullName evidence="1">Heat shock protein HtpG</fullName>
    </alternativeName>
    <alternativeName>
        <fullName evidence="1">High temperature protein G</fullName>
    </alternativeName>
</protein>
<dbReference type="EMBL" id="AP008230">
    <property type="protein sequence ID" value="BAE83855.1"/>
    <property type="molecule type" value="Genomic_DNA"/>
</dbReference>
<dbReference type="RefSeq" id="WP_011460040.1">
    <property type="nucleotide sequence ID" value="NC_007907.1"/>
</dbReference>
<dbReference type="SMR" id="Q24VT7"/>
<dbReference type="STRING" id="138119.DSY2066"/>
<dbReference type="KEGG" id="dsy:DSY2066"/>
<dbReference type="eggNOG" id="COG0326">
    <property type="taxonomic scope" value="Bacteria"/>
</dbReference>
<dbReference type="HOGENOM" id="CLU_006684_3_1_9"/>
<dbReference type="Proteomes" id="UP000001946">
    <property type="component" value="Chromosome"/>
</dbReference>
<dbReference type="GO" id="GO:0005737">
    <property type="term" value="C:cytoplasm"/>
    <property type="evidence" value="ECO:0007669"/>
    <property type="project" value="UniProtKB-SubCell"/>
</dbReference>
<dbReference type="GO" id="GO:0005524">
    <property type="term" value="F:ATP binding"/>
    <property type="evidence" value="ECO:0007669"/>
    <property type="project" value="UniProtKB-UniRule"/>
</dbReference>
<dbReference type="GO" id="GO:0016887">
    <property type="term" value="F:ATP hydrolysis activity"/>
    <property type="evidence" value="ECO:0007669"/>
    <property type="project" value="InterPro"/>
</dbReference>
<dbReference type="GO" id="GO:0140662">
    <property type="term" value="F:ATP-dependent protein folding chaperone"/>
    <property type="evidence" value="ECO:0007669"/>
    <property type="project" value="InterPro"/>
</dbReference>
<dbReference type="GO" id="GO:0051082">
    <property type="term" value="F:unfolded protein binding"/>
    <property type="evidence" value="ECO:0007669"/>
    <property type="project" value="UniProtKB-UniRule"/>
</dbReference>
<dbReference type="CDD" id="cd16927">
    <property type="entry name" value="HATPase_Hsp90-like"/>
    <property type="match status" value="1"/>
</dbReference>
<dbReference type="FunFam" id="3.30.230.80:FF:000004">
    <property type="entry name" value="Heat shock protein 75 kDa"/>
    <property type="match status" value="1"/>
</dbReference>
<dbReference type="FunFam" id="3.30.565.10:FF:000009">
    <property type="entry name" value="Molecular chaperone HtpG"/>
    <property type="match status" value="1"/>
</dbReference>
<dbReference type="Gene3D" id="3.30.230.80">
    <property type="match status" value="1"/>
</dbReference>
<dbReference type="Gene3D" id="3.40.50.11260">
    <property type="match status" value="1"/>
</dbReference>
<dbReference type="Gene3D" id="1.20.120.790">
    <property type="entry name" value="Heat shock protein 90, C-terminal domain"/>
    <property type="match status" value="1"/>
</dbReference>
<dbReference type="Gene3D" id="3.30.565.10">
    <property type="entry name" value="Histidine kinase-like ATPase, C-terminal domain"/>
    <property type="match status" value="1"/>
</dbReference>
<dbReference type="HAMAP" id="MF_00505">
    <property type="entry name" value="HSP90"/>
    <property type="match status" value="1"/>
</dbReference>
<dbReference type="InterPro" id="IPR036890">
    <property type="entry name" value="HATPase_C_sf"/>
</dbReference>
<dbReference type="InterPro" id="IPR019805">
    <property type="entry name" value="Heat_shock_protein_90_CS"/>
</dbReference>
<dbReference type="InterPro" id="IPR037196">
    <property type="entry name" value="HSP90_C"/>
</dbReference>
<dbReference type="InterPro" id="IPR001404">
    <property type="entry name" value="Hsp90_fam"/>
</dbReference>
<dbReference type="InterPro" id="IPR020575">
    <property type="entry name" value="Hsp90_N"/>
</dbReference>
<dbReference type="InterPro" id="IPR020568">
    <property type="entry name" value="Ribosomal_Su5_D2-typ_SF"/>
</dbReference>
<dbReference type="NCBIfam" id="NF003555">
    <property type="entry name" value="PRK05218.1"/>
    <property type="match status" value="1"/>
</dbReference>
<dbReference type="PANTHER" id="PTHR11528">
    <property type="entry name" value="HEAT SHOCK PROTEIN 90 FAMILY MEMBER"/>
    <property type="match status" value="1"/>
</dbReference>
<dbReference type="Pfam" id="PF13589">
    <property type="entry name" value="HATPase_c_3"/>
    <property type="match status" value="1"/>
</dbReference>
<dbReference type="Pfam" id="PF00183">
    <property type="entry name" value="HSP90"/>
    <property type="match status" value="1"/>
</dbReference>
<dbReference type="PIRSF" id="PIRSF002583">
    <property type="entry name" value="Hsp90"/>
    <property type="match status" value="1"/>
</dbReference>
<dbReference type="PRINTS" id="PR00775">
    <property type="entry name" value="HEATSHOCK90"/>
</dbReference>
<dbReference type="SUPFAM" id="SSF55874">
    <property type="entry name" value="ATPase domain of HSP90 chaperone/DNA topoisomerase II/histidine kinase"/>
    <property type="match status" value="1"/>
</dbReference>
<dbReference type="SUPFAM" id="SSF110942">
    <property type="entry name" value="HSP90 C-terminal domain"/>
    <property type="match status" value="1"/>
</dbReference>
<dbReference type="SUPFAM" id="SSF54211">
    <property type="entry name" value="Ribosomal protein S5 domain 2-like"/>
    <property type="match status" value="1"/>
</dbReference>
<dbReference type="PROSITE" id="PS00298">
    <property type="entry name" value="HSP90"/>
    <property type="match status" value="1"/>
</dbReference>
<sequence>MSQIETKEFQTEIRQLLDIVINSLYTDREIFLRELISNAADASEKVRYMQLSGQNVKDQELPLEIRITPDENAKTLTIADAGIGMTKEDLIENIGTIAHSGSKAFVQRLAEAGDKKDVNLIGQFGVGFYSAFMVADKVSLTSRSYEPDAQGYRWESDGRGSYSISEEMDLPRGTSITLHLKEDAHSFAQADTVKRIIKQYSSFVPYPVYVGEEKINTVQALWTKNKNEISEEEYKEFYKYIANAYDEPLMRMHFSSDAPINLNALLFVPKSNMEKFGFGRMEAGVNLYCKKVLIQEKAKDIVPEWLRFARGVVDSEELPLNISRETMQDSALIAKLNKVVTSRFLKFLDDQAKNEPEIFKEFWNEFSIFLKEGAANDFTHRQEILKLLRFESSKTGEGELISLGDYVGRMKEGQEAIYFINGPTRQIIEEGPYLEVFKNKDYEVIYTYDGIDDYVFDMIREYDGKRLLSADHGDLNLADEDGASAEEKLLSEEELKEFNDWLKEVLGEKVTEVRESKRLVDSPAIILSHYGTHSMQRMMQLMNRDLQDVPAGILEINPKHVLIQRLNDLRKQEDSFAPLAAEQLFANAQIAAGIIVDPRSMVSRLNEILEKALR</sequence>
<evidence type="ECO:0000255" key="1">
    <source>
        <dbReference type="HAMAP-Rule" id="MF_00505"/>
    </source>
</evidence>
<feature type="chain" id="PRO_0000258509" description="Chaperone protein HtpG">
    <location>
        <begin position="1"/>
        <end position="614"/>
    </location>
</feature>
<feature type="region of interest" description="A; substrate-binding" evidence="1">
    <location>
        <begin position="1"/>
        <end position="324"/>
    </location>
</feature>
<feature type="region of interest" description="B" evidence="1">
    <location>
        <begin position="325"/>
        <end position="537"/>
    </location>
</feature>
<feature type="region of interest" description="C" evidence="1">
    <location>
        <begin position="538"/>
        <end position="614"/>
    </location>
</feature>
<accession>Q24VT7</accession>
<proteinExistence type="inferred from homology"/>
<organism>
    <name type="scientific">Desulfitobacterium hafniense (strain Y51)</name>
    <dbReference type="NCBI Taxonomy" id="138119"/>
    <lineage>
        <taxon>Bacteria</taxon>
        <taxon>Bacillati</taxon>
        <taxon>Bacillota</taxon>
        <taxon>Clostridia</taxon>
        <taxon>Eubacteriales</taxon>
        <taxon>Desulfitobacteriaceae</taxon>
        <taxon>Desulfitobacterium</taxon>
    </lineage>
</organism>
<gene>
    <name evidence="1" type="primary">htpG</name>
    <name type="ordered locus">DSY2066</name>
</gene>
<name>HTPG_DESHY</name>
<keyword id="KW-0067">ATP-binding</keyword>
<keyword id="KW-0143">Chaperone</keyword>
<keyword id="KW-0963">Cytoplasm</keyword>
<keyword id="KW-0547">Nucleotide-binding</keyword>
<keyword id="KW-1185">Reference proteome</keyword>
<keyword id="KW-0346">Stress response</keyword>
<reference key="1">
    <citation type="journal article" date="2006" name="J. Bacteriol.">
        <title>Complete genome sequence of the dehalorespiring bacterium Desulfitobacterium hafniense Y51 and comparison with Dehalococcoides ethenogenes 195.</title>
        <authorList>
            <person name="Nonaka H."/>
            <person name="Keresztes G."/>
            <person name="Shinoda Y."/>
            <person name="Ikenaga Y."/>
            <person name="Abe M."/>
            <person name="Naito K."/>
            <person name="Inatomi K."/>
            <person name="Furukawa K."/>
            <person name="Inui M."/>
            <person name="Yukawa H."/>
        </authorList>
    </citation>
    <scope>NUCLEOTIDE SEQUENCE [LARGE SCALE GENOMIC DNA]</scope>
    <source>
        <strain>Y51</strain>
    </source>
</reference>
<comment type="function">
    <text evidence="1">Molecular chaperone. Has ATPase activity.</text>
</comment>
<comment type="subunit">
    <text evidence="1">Homodimer.</text>
</comment>
<comment type="subcellular location">
    <subcellularLocation>
        <location evidence="1">Cytoplasm</location>
    </subcellularLocation>
</comment>
<comment type="similarity">
    <text evidence="1">Belongs to the heat shock protein 90 family.</text>
</comment>